<sequence>MLRVAVPNKGALSEPATEILAEAGYRRRTDSKDLTVIDPVNNVEFFFLRPKDIAIYVGSGELDFGITGRDLVCDSGAQVRERLALGFGSSSFRYAAPAGRNWTTADLAGMRIATAYPNLVRKDLATKGIEATVIRLDGAVEISVQLGVADAIADVVGSGRTLSQHDLVAFGEPLCDSEAVLIERAGTDGQDQTEARDQLVARVQGVVFGQQYLMLDYDCPRSALKKATAITPGLESPTIAPLADPDWVAIRALVPRRDVNGIMDELAAIGAKAILASDIRFCRF</sequence>
<protein>
    <recommendedName>
        <fullName evidence="1">ATP phosphoribosyltransferase</fullName>
        <shortName evidence="1">ATP-PRT</shortName>
        <shortName evidence="1">ATP-PRTase</shortName>
        <ecNumber evidence="1">2.4.2.17</ecNumber>
    </recommendedName>
</protein>
<keyword id="KW-0028">Amino-acid biosynthesis</keyword>
<keyword id="KW-0067">ATP-binding</keyword>
<keyword id="KW-0963">Cytoplasm</keyword>
<keyword id="KW-0328">Glycosyltransferase</keyword>
<keyword id="KW-0368">Histidine biosynthesis</keyword>
<keyword id="KW-0460">Magnesium</keyword>
<keyword id="KW-0479">Metal-binding</keyword>
<keyword id="KW-0547">Nucleotide-binding</keyword>
<keyword id="KW-1185">Reference proteome</keyword>
<keyword id="KW-0808">Transferase</keyword>
<evidence type="ECO:0000255" key="1">
    <source>
        <dbReference type="HAMAP-Rule" id="MF_00079"/>
    </source>
</evidence>
<proteinExistence type="inferred from homology"/>
<gene>
    <name evidence="1" type="primary">hisG</name>
    <name type="ordered locus">MRA_2136</name>
</gene>
<accession>A5U4E7</accession>
<name>HIS1_MYCTA</name>
<reference key="1">
    <citation type="journal article" date="2008" name="PLoS ONE">
        <title>Genetic basis of virulence attenuation revealed by comparative genomic analysis of Mycobacterium tuberculosis strain H37Ra versus H37Rv.</title>
        <authorList>
            <person name="Zheng H."/>
            <person name="Lu L."/>
            <person name="Wang B."/>
            <person name="Pu S."/>
            <person name="Zhang X."/>
            <person name="Zhu G."/>
            <person name="Shi W."/>
            <person name="Zhang L."/>
            <person name="Wang H."/>
            <person name="Wang S."/>
            <person name="Zhao G."/>
            <person name="Zhang Y."/>
        </authorList>
    </citation>
    <scope>NUCLEOTIDE SEQUENCE [LARGE SCALE GENOMIC DNA]</scope>
    <source>
        <strain>ATCC 25177 / H37Ra</strain>
    </source>
</reference>
<comment type="function">
    <text evidence="1">Catalyzes the condensation of ATP and 5-phosphoribose 1-diphosphate to form N'-(5'-phosphoribosyl)-ATP (PR-ATP). Has a crucial role in the pathway because the rate of histidine biosynthesis seems to be controlled primarily by regulation of HisG enzymatic activity.</text>
</comment>
<comment type="catalytic activity">
    <reaction evidence="1">
        <text>1-(5-phospho-beta-D-ribosyl)-ATP + diphosphate = 5-phospho-alpha-D-ribose 1-diphosphate + ATP</text>
        <dbReference type="Rhea" id="RHEA:18473"/>
        <dbReference type="ChEBI" id="CHEBI:30616"/>
        <dbReference type="ChEBI" id="CHEBI:33019"/>
        <dbReference type="ChEBI" id="CHEBI:58017"/>
        <dbReference type="ChEBI" id="CHEBI:73183"/>
        <dbReference type="EC" id="2.4.2.17"/>
    </reaction>
</comment>
<comment type="cofactor">
    <cofactor evidence="1">
        <name>Mg(2+)</name>
        <dbReference type="ChEBI" id="CHEBI:18420"/>
    </cofactor>
</comment>
<comment type="activity regulation">
    <text evidence="1">Feedback inhibited by histidine.</text>
</comment>
<comment type="pathway">
    <text evidence="1">Amino-acid biosynthesis; L-histidine biosynthesis; L-histidine from 5-phospho-alpha-D-ribose 1-diphosphate: step 1/9.</text>
</comment>
<comment type="subunit">
    <text evidence="1">Equilibrium between an active dimeric form, an inactive hexameric form and higher aggregates. Interconversion between the various forms is largely reversible and is influenced by the natural substrates and inhibitors of the enzyme.</text>
</comment>
<comment type="subcellular location">
    <subcellularLocation>
        <location evidence="1">Cytoplasm</location>
    </subcellularLocation>
</comment>
<comment type="similarity">
    <text evidence="1">Belongs to the ATP phosphoribosyltransferase family. Long subfamily.</text>
</comment>
<organism>
    <name type="scientific">Mycobacterium tuberculosis (strain ATCC 25177 / H37Ra)</name>
    <dbReference type="NCBI Taxonomy" id="419947"/>
    <lineage>
        <taxon>Bacteria</taxon>
        <taxon>Bacillati</taxon>
        <taxon>Actinomycetota</taxon>
        <taxon>Actinomycetes</taxon>
        <taxon>Mycobacteriales</taxon>
        <taxon>Mycobacteriaceae</taxon>
        <taxon>Mycobacterium</taxon>
        <taxon>Mycobacterium tuberculosis complex</taxon>
    </lineage>
</organism>
<feature type="chain" id="PRO_1000004479" description="ATP phosphoribosyltransferase">
    <location>
        <begin position="1"/>
        <end position="284"/>
    </location>
</feature>
<dbReference type="EC" id="2.4.2.17" evidence="1"/>
<dbReference type="EMBL" id="CP000611">
    <property type="protein sequence ID" value="ABQ73897.1"/>
    <property type="molecule type" value="Genomic_DNA"/>
</dbReference>
<dbReference type="RefSeq" id="WP_003411047.1">
    <property type="nucleotide sequence ID" value="NZ_CP016972.1"/>
</dbReference>
<dbReference type="SMR" id="A5U4E7"/>
<dbReference type="GeneID" id="45426096"/>
<dbReference type="KEGG" id="mra:MRA_2136"/>
<dbReference type="eggNOG" id="COG0040">
    <property type="taxonomic scope" value="Bacteria"/>
</dbReference>
<dbReference type="HOGENOM" id="CLU_038115_1_1_11"/>
<dbReference type="UniPathway" id="UPA00031">
    <property type="reaction ID" value="UER00006"/>
</dbReference>
<dbReference type="Proteomes" id="UP000001988">
    <property type="component" value="Chromosome"/>
</dbReference>
<dbReference type="GO" id="GO:0005737">
    <property type="term" value="C:cytoplasm"/>
    <property type="evidence" value="ECO:0007669"/>
    <property type="project" value="UniProtKB-SubCell"/>
</dbReference>
<dbReference type="GO" id="GO:0005524">
    <property type="term" value="F:ATP binding"/>
    <property type="evidence" value="ECO:0007669"/>
    <property type="project" value="UniProtKB-KW"/>
</dbReference>
<dbReference type="GO" id="GO:0003879">
    <property type="term" value="F:ATP phosphoribosyltransferase activity"/>
    <property type="evidence" value="ECO:0007669"/>
    <property type="project" value="UniProtKB-UniRule"/>
</dbReference>
<dbReference type="GO" id="GO:0000287">
    <property type="term" value="F:magnesium ion binding"/>
    <property type="evidence" value="ECO:0007669"/>
    <property type="project" value="UniProtKB-UniRule"/>
</dbReference>
<dbReference type="GO" id="GO:0000105">
    <property type="term" value="P:L-histidine biosynthetic process"/>
    <property type="evidence" value="ECO:0007669"/>
    <property type="project" value="UniProtKB-UniRule"/>
</dbReference>
<dbReference type="CDD" id="cd13591">
    <property type="entry name" value="PBP2_HisGL1"/>
    <property type="match status" value="1"/>
</dbReference>
<dbReference type="FunFam" id="3.30.70.120:FF:000003">
    <property type="entry name" value="ATP phosphoribosyltransferase"/>
    <property type="match status" value="1"/>
</dbReference>
<dbReference type="FunFam" id="3.40.190.10:FF:000115">
    <property type="entry name" value="ATP phosphoribosyltransferase"/>
    <property type="match status" value="1"/>
</dbReference>
<dbReference type="Gene3D" id="3.30.70.120">
    <property type="match status" value="1"/>
</dbReference>
<dbReference type="Gene3D" id="3.40.190.10">
    <property type="entry name" value="Periplasmic binding protein-like II"/>
    <property type="match status" value="2"/>
</dbReference>
<dbReference type="HAMAP" id="MF_00079">
    <property type="entry name" value="HisG_Long"/>
    <property type="match status" value="1"/>
</dbReference>
<dbReference type="InterPro" id="IPR020621">
    <property type="entry name" value="ATP-PRT_HisG_long"/>
</dbReference>
<dbReference type="InterPro" id="IPR013820">
    <property type="entry name" value="ATP_PRibTrfase_cat"/>
</dbReference>
<dbReference type="InterPro" id="IPR018198">
    <property type="entry name" value="ATP_PRibTrfase_CS"/>
</dbReference>
<dbReference type="InterPro" id="IPR001348">
    <property type="entry name" value="ATP_PRibTrfase_HisG"/>
</dbReference>
<dbReference type="InterPro" id="IPR013115">
    <property type="entry name" value="HisG_C"/>
</dbReference>
<dbReference type="InterPro" id="IPR011322">
    <property type="entry name" value="N-reg_PII-like_a/b"/>
</dbReference>
<dbReference type="InterPro" id="IPR015867">
    <property type="entry name" value="N-reg_PII/ATP_PRibTrfase_C"/>
</dbReference>
<dbReference type="NCBIfam" id="TIGR00070">
    <property type="entry name" value="hisG"/>
    <property type="match status" value="1"/>
</dbReference>
<dbReference type="NCBIfam" id="TIGR03455">
    <property type="entry name" value="HisG_C-term"/>
    <property type="match status" value="1"/>
</dbReference>
<dbReference type="PANTHER" id="PTHR21403:SF8">
    <property type="entry name" value="ATP PHOSPHORIBOSYLTRANSFERASE"/>
    <property type="match status" value="1"/>
</dbReference>
<dbReference type="PANTHER" id="PTHR21403">
    <property type="entry name" value="ATP PHOSPHORIBOSYLTRANSFERASE ATP-PRTASE"/>
    <property type="match status" value="1"/>
</dbReference>
<dbReference type="Pfam" id="PF01634">
    <property type="entry name" value="HisG"/>
    <property type="match status" value="1"/>
</dbReference>
<dbReference type="Pfam" id="PF08029">
    <property type="entry name" value="HisG_C"/>
    <property type="match status" value="1"/>
</dbReference>
<dbReference type="SUPFAM" id="SSF54913">
    <property type="entry name" value="GlnB-like"/>
    <property type="match status" value="1"/>
</dbReference>
<dbReference type="SUPFAM" id="SSF53850">
    <property type="entry name" value="Periplasmic binding protein-like II"/>
    <property type="match status" value="1"/>
</dbReference>
<dbReference type="PROSITE" id="PS01316">
    <property type="entry name" value="ATP_P_PHORIBOSYLTR"/>
    <property type="match status" value="1"/>
</dbReference>